<evidence type="ECO:0000250" key="1"/>
<evidence type="ECO:0000255" key="2">
    <source>
        <dbReference type="HAMAP-Rule" id="MF_00405"/>
    </source>
</evidence>
<protein>
    <recommendedName>
        <fullName evidence="2">3-hydroxydecanoyl-[acyl-carrier-protein] dehydratase</fullName>
        <ecNumber evidence="2">4.2.1.59</ecNumber>
    </recommendedName>
    <alternativeName>
        <fullName evidence="2">3-hydroxyacyl-[acyl-carrier-protein] dehydratase FabA</fullName>
    </alternativeName>
    <alternativeName>
        <fullName evidence="2">Beta-hydroxydecanoyl thioester dehydrase</fullName>
    </alternativeName>
    <alternativeName>
        <fullName evidence="2">Trans-2-decenoyl-[acyl-carrier-protein] isomerase</fullName>
        <ecNumber evidence="2">5.3.3.14</ecNumber>
    </alternativeName>
</protein>
<keyword id="KW-0963">Cytoplasm</keyword>
<keyword id="KW-0275">Fatty acid biosynthesis</keyword>
<keyword id="KW-0276">Fatty acid metabolism</keyword>
<keyword id="KW-0413">Isomerase</keyword>
<keyword id="KW-0444">Lipid biosynthesis</keyword>
<keyword id="KW-0443">Lipid metabolism</keyword>
<keyword id="KW-0456">Lyase</keyword>
<keyword id="KW-1185">Reference proteome</keyword>
<dbReference type="EC" id="4.2.1.59" evidence="2"/>
<dbReference type="EC" id="5.3.3.14" evidence="2"/>
<dbReference type="EMBL" id="AE006468">
    <property type="protein sequence ID" value="AAL20000.1"/>
    <property type="molecule type" value="Genomic_DNA"/>
</dbReference>
<dbReference type="RefSeq" id="NP_460041.1">
    <property type="nucleotide sequence ID" value="NC_003197.2"/>
</dbReference>
<dbReference type="RefSeq" id="WP_000227928.1">
    <property type="nucleotide sequence ID" value="NC_003197.2"/>
</dbReference>
<dbReference type="SMR" id="P64105"/>
<dbReference type="STRING" id="99287.STM1067"/>
<dbReference type="PaxDb" id="99287-STM1067"/>
<dbReference type="GeneID" id="1252585"/>
<dbReference type="KEGG" id="stm:STM1067"/>
<dbReference type="PATRIC" id="fig|99287.12.peg.1132"/>
<dbReference type="HOGENOM" id="CLU_097925_0_0_6"/>
<dbReference type="OMA" id="FDCHFKG"/>
<dbReference type="PhylomeDB" id="P64105"/>
<dbReference type="BioCyc" id="SENT99287:STM1067-MONOMER"/>
<dbReference type="UniPathway" id="UPA00094"/>
<dbReference type="Proteomes" id="UP000001014">
    <property type="component" value="Chromosome"/>
</dbReference>
<dbReference type="GO" id="GO:0005737">
    <property type="term" value="C:cytoplasm"/>
    <property type="evidence" value="ECO:0007669"/>
    <property type="project" value="UniProtKB-SubCell"/>
</dbReference>
<dbReference type="GO" id="GO:0019171">
    <property type="term" value="F:(3R)-hydroxyacyl-[acyl-carrier-protein] dehydratase activity"/>
    <property type="evidence" value="ECO:0007669"/>
    <property type="project" value="UniProtKB-UniRule"/>
</dbReference>
<dbReference type="GO" id="GO:0034017">
    <property type="term" value="F:trans-2-decenoyl-acyl-carrier-protein isomerase activity"/>
    <property type="evidence" value="ECO:0007669"/>
    <property type="project" value="UniProtKB-UniRule"/>
</dbReference>
<dbReference type="GO" id="GO:0006636">
    <property type="term" value="P:unsaturated fatty acid biosynthetic process"/>
    <property type="evidence" value="ECO:0007669"/>
    <property type="project" value="UniProtKB-UniRule"/>
</dbReference>
<dbReference type="CDD" id="cd01287">
    <property type="entry name" value="FabA"/>
    <property type="match status" value="1"/>
</dbReference>
<dbReference type="FunFam" id="3.10.129.10:FF:000003">
    <property type="entry name" value="3-hydroxydecanoyl-[acyl-carrier-protein] dehydratase"/>
    <property type="match status" value="1"/>
</dbReference>
<dbReference type="Gene3D" id="3.10.129.10">
    <property type="entry name" value="Hotdog Thioesterase"/>
    <property type="match status" value="1"/>
</dbReference>
<dbReference type="HAMAP" id="MF_00405">
    <property type="entry name" value="FabA"/>
    <property type="match status" value="1"/>
</dbReference>
<dbReference type="InterPro" id="IPR010083">
    <property type="entry name" value="FabA"/>
</dbReference>
<dbReference type="InterPro" id="IPR013114">
    <property type="entry name" value="FabA_FabZ"/>
</dbReference>
<dbReference type="InterPro" id="IPR029069">
    <property type="entry name" value="HotDog_dom_sf"/>
</dbReference>
<dbReference type="NCBIfam" id="TIGR01749">
    <property type="entry name" value="fabA"/>
    <property type="match status" value="1"/>
</dbReference>
<dbReference type="NCBIfam" id="NF003509">
    <property type="entry name" value="PRK05174.1"/>
    <property type="match status" value="1"/>
</dbReference>
<dbReference type="PANTHER" id="PTHR30272">
    <property type="entry name" value="3-HYDROXYACYL-[ACYL-CARRIER-PROTEIN] DEHYDRATASE"/>
    <property type="match status" value="1"/>
</dbReference>
<dbReference type="PANTHER" id="PTHR30272:SF8">
    <property type="entry name" value="3-HYDROXYDECANOYL-[ACYL-CARRIER-PROTEIN] DEHYDRATASE"/>
    <property type="match status" value="1"/>
</dbReference>
<dbReference type="Pfam" id="PF07977">
    <property type="entry name" value="FabA"/>
    <property type="match status" value="1"/>
</dbReference>
<dbReference type="SUPFAM" id="SSF54637">
    <property type="entry name" value="Thioesterase/thiol ester dehydrase-isomerase"/>
    <property type="match status" value="1"/>
</dbReference>
<feature type="initiator methionine" description="Removed" evidence="1">
    <location>
        <position position="1"/>
    </location>
</feature>
<feature type="chain" id="PRO_0000091614" description="3-hydroxydecanoyl-[acyl-carrier-protein] dehydratase">
    <location>
        <begin position="2"/>
        <end position="172"/>
    </location>
</feature>
<feature type="active site" evidence="2">
    <location>
        <position position="71"/>
    </location>
</feature>
<organism>
    <name type="scientific">Salmonella typhimurium (strain LT2 / SGSC1412 / ATCC 700720)</name>
    <dbReference type="NCBI Taxonomy" id="99287"/>
    <lineage>
        <taxon>Bacteria</taxon>
        <taxon>Pseudomonadati</taxon>
        <taxon>Pseudomonadota</taxon>
        <taxon>Gammaproteobacteria</taxon>
        <taxon>Enterobacterales</taxon>
        <taxon>Enterobacteriaceae</taxon>
        <taxon>Salmonella</taxon>
    </lineage>
</organism>
<accession>P64105</accession>
<accession>Q8XEY3</accession>
<sequence>MVDKRESYTKEDLLASGRGELFGAKGPQLPAPNMLMMDRVVKMTETGGNFDKGYVEAELDINPDLWFFGCHFIGDPVMPGCLGLDAMWQLVGFYLGWLGGEGKGRALGVGEVKFTGQVLPTARKVTYRIHFKRIVNRRLIMGLADGEVLVDGRLIYTAHDLKVGLFQDTSAF</sequence>
<gene>
    <name evidence="2" type="primary">fabA</name>
    <name type="ordered locus">STM1067</name>
</gene>
<reference key="1">
    <citation type="journal article" date="2001" name="Nature">
        <title>Complete genome sequence of Salmonella enterica serovar Typhimurium LT2.</title>
        <authorList>
            <person name="McClelland M."/>
            <person name="Sanderson K.E."/>
            <person name="Spieth J."/>
            <person name="Clifton S.W."/>
            <person name="Latreille P."/>
            <person name="Courtney L."/>
            <person name="Porwollik S."/>
            <person name="Ali J."/>
            <person name="Dante M."/>
            <person name="Du F."/>
            <person name="Hou S."/>
            <person name="Layman D."/>
            <person name="Leonard S."/>
            <person name="Nguyen C."/>
            <person name="Scott K."/>
            <person name="Holmes A."/>
            <person name="Grewal N."/>
            <person name="Mulvaney E."/>
            <person name="Ryan E."/>
            <person name="Sun H."/>
            <person name="Florea L."/>
            <person name="Miller W."/>
            <person name="Stoneking T."/>
            <person name="Nhan M."/>
            <person name="Waterston R."/>
            <person name="Wilson R.K."/>
        </authorList>
    </citation>
    <scope>NUCLEOTIDE SEQUENCE [LARGE SCALE GENOMIC DNA]</scope>
    <source>
        <strain>LT2 / SGSC1412 / ATCC 700720</strain>
    </source>
</reference>
<proteinExistence type="inferred from homology"/>
<name>FABA_SALTY</name>
<comment type="function">
    <text evidence="2">Necessary for the introduction of cis unsaturation into fatty acids. Catalyzes the dehydration of (3R)-3-hydroxydecanoyl-ACP to E-(2)-decenoyl-ACP and then its isomerization to Z-(3)-decenoyl-ACP. Can catalyze the dehydratase reaction for beta-hydroxyacyl-ACPs with saturated chain lengths up to 16:0, being most active on intermediate chain length.</text>
</comment>
<comment type="catalytic activity">
    <reaction evidence="2">
        <text>a (3R)-hydroxyacyl-[ACP] = a (2E)-enoyl-[ACP] + H2O</text>
        <dbReference type="Rhea" id="RHEA:13097"/>
        <dbReference type="Rhea" id="RHEA-COMP:9925"/>
        <dbReference type="Rhea" id="RHEA-COMP:9945"/>
        <dbReference type="ChEBI" id="CHEBI:15377"/>
        <dbReference type="ChEBI" id="CHEBI:78784"/>
        <dbReference type="ChEBI" id="CHEBI:78827"/>
        <dbReference type="EC" id="4.2.1.59"/>
    </reaction>
</comment>
<comment type="catalytic activity">
    <reaction evidence="2">
        <text>(3R)-hydroxydecanoyl-[ACP] = (2E)-decenoyl-[ACP] + H2O</text>
        <dbReference type="Rhea" id="RHEA:41860"/>
        <dbReference type="Rhea" id="RHEA-COMP:9638"/>
        <dbReference type="Rhea" id="RHEA-COMP:9639"/>
        <dbReference type="ChEBI" id="CHEBI:15377"/>
        <dbReference type="ChEBI" id="CHEBI:78466"/>
        <dbReference type="ChEBI" id="CHEBI:78467"/>
    </reaction>
</comment>
<comment type="catalytic activity">
    <reaction evidence="2">
        <text>(2E)-decenoyl-[ACP] = (3Z)-decenoyl-[ACP]</text>
        <dbReference type="Rhea" id="RHEA:23568"/>
        <dbReference type="Rhea" id="RHEA-COMP:9639"/>
        <dbReference type="Rhea" id="RHEA-COMP:9927"/>
        <dbReference type="ChEBI" id="CHEBI:78467"/>
        <dbReference type="ChEBI" id="CHEBI:78798"/>
        <dbReference type="EC" id="5.3.3.14"/>
    </reaction>
</comment>
<comment type="pathway">
    <text evidence="2">Lipid metabolism; fatty acid biosynthesis.</text>
</comment>
<comment type="subunit">
    <text evidence="2">Homodimer.</text>
</comment>
<comment type="subcellular location">
    <subcellularLocation>
        <location evidence="2">Cytoplasm</location>
    </subcellularLocation>
</comment>
<comment type="similarity">
    <text evidence="2">Belongs to the thioester dehydratase family. FabA subfamily.</text>
</comment>